<feature type="chain" id="PRO_1000090283" description="Holliday junction branch migration complex subunit RuvA">
    <location>
        <begin position="1"/>
        <end position="208"/>
    </location>
</feature>
<feature type="region of interest" description="Domain I" evidence="1">
    <location>
        <begin position="1"/>
        <end position="63"/>
    </location>
</feature>
<feature type="region of interest" description="Domain II" evidence="1">
    <location>
        <begin position="64"/>
        <end position="142"/>
    </location>
</feature>
<feature type="region of interest" description="Flexible linker" evidence="1">
    <location>
        <begin position="143"/>
        <end position="151"/>
    </location>
</feature>
<feature type="region of interest" description="Domain III" evidence="1">
    <location>
        <begin position="151"/>
        <end position="208"/>
    </location>
</feature>
<protein>
    <recommendedName>
        <fullName evidence="1">Holliday junction branch migration complex subunit RuvA</fullName>
    </recommendedName>
</protein>
<organism>
    <name type="scientific">Bifidobacterium longum (strain DJO10A)</name>
    <dbReference type="NCBI Taxonomy" id="205913"/>
    <lineage>
        <taxon>Bacteria</taxon>
        <taxon>Bacillati</taxon>
        <taxon>Actinomycetota</taxon>
        <taxon>Actinomycetes</taxon>
        <taxon>Bifidobacteriales</taxon>
        <taxon>Bifidobacteriaceae</taxon>
        <taxon>Bifidobacterium</taxon>
    </lineage>
</organism>
<gene>
    <name evidence="1" type="primary">ruvA</name>
    <name type="ordered locus">BLD_0452</name>
</gene>
<proteinExistence type="inferred from homology"/>
<name>RUVA_BIFLD</name>
<evidence type="ECO:0000255" key="1">
    <source>
        <dbReference type="HAMAP-Rule" id="MF_00031"/>
    </source>
</evidence>
<comment type="function">
    <text evidence="1">The RuvA-RuvB-RuvC complex processes Holliday junction (HJ) DNA during genetic recombination and DNA repair, while the RuvA-RuvB complex plays an important role in the rescue of blocked DNA replication forks via replication fork reversal (RFR). RuvA specifically binds to HJ cruciform DNA, conferring on it an open structure. The RuvB hexamer acts as an ATP-dependent pump, pulling dsDNA into and through the RuvAB complex. HJ branch migration allows RuvC to scan DNA until it finds its consensus sequence, where it cleaves and resolves the cruciform DNA.</text>
</comment>
<comment type="subunit">
    <text evidence="1">Homotetramer. Forms an RuvA(8)-RuvB(12)-Holliday junction (HJ) complex. HJ DNA is sandwiched between 2 RuvA tetramers; dsDNA enters through RuvA and exits via RuvB. An RuvB hexamer assembles on each DNA strand where it exits the tetramer. Each RuvB hexamer is contacted by two RuvA subunits (via domain III) on 2 adjacent RuvB subunits; this complex drives branch migration. In the full resolvosome a probable DNA-RuvA(4)-RuvB(12)-RuvC(2) complex forms which resolves the HJ.</text>
</comment>
<comment type="subcellular location">
    <subcellularLocation>
        <location evidence="1">Cytoplasm</location>
    </subcellularLocation>
</comment>
<comment type="domain">
    <text evidence="1">Has three domains with a flexible linker between the domains II and III and assumes an 'L' shape. Domain III is highly mobile and contacts RuvB.</text>
</comment>
<comment type="similarity">
    <text evidence="1">Belongs to the RuvA family.</text>
</comment>
<reference key="1">
    <citation type="journal article" date="2008" name="BMC Genomics">
        <title>Comparative genomic analysis of the gut bacterium Bifidobacterium longum reveals loci susceptible to deletion during pure culture growth.</title>
        <authorList>
            <person name="Lee J.H."/>
            <person name="Karamychev V.N."/>
            <person name="Kozyavkin S.A."/>
            <person name="Mills D."/>
            <person name="Pavlov A.R."/>
            <person name="Pavlova N.V."/>
            <person name="Polouchine N.N."/>
            <person name="Richardson P.M."/>
            <person name="Shakhova V.V."/>
            <person name="Slesarev A.I."/>
            <person name="Weimer B."/>
            <person name="O'Sullivan D.J."/>
        </authorList>
    </citation>
    <scope>NUCLEOTIDE SEQUENCE [LARGE SCALE GENOMIC DNA]</scope>
    <source>
        <strain>DJO10A</strain>
    </source>
</reference>
<keyword id="KW-0963">Cytoplasm</keyword>
<keyword id="KW-0227">DNA damage</keyword>
<keyword id="KW-0233">DNA recombination</keyword>
<keyword id="KW-0234">DNA repair</keyword>
<keyword id="KW-0238">DNA-binding</keyword>
<accession>B3DRX9</accession>
<sequence>MIGMLTGRVESVETDTALIDVGGVGYEVRMSATDLSRLHAGQDTRVFTYMNLSQDAITLHGFLDRDAKKTFLQLIKVSGIGPKVAQSLLSTLTPSQLAHAIADNDATALAKAPGLGKKGAQKIILELKGSIDLSQIEGASAQAATSKSPVDTGTEQVVEGLISLGWRQQDAQQAVAEACAENDIPTPLATDDVPRVLRLALALMDRGR</sequence>
<dbReference type="EMBL" id="CP000605">
    <property type="protein sequence ID" value="ACD97898.1"/>
    <property type="molecule type" value="Genomic_DNA"/>
</dbReference>
<dbReference type="RefSeq" id="WP_007052857.1">
    <property type="nucleotide sequence ID" value="NZ_AABM02000001.1"/>
</dbReference>
<dbReference type="SMR" id="B3DRX9"/>
<dbReference type="KEGG" id="blj:BLD_0452"/>
<dbReference type="HOGENOM" id="CLU_087936_2_1_11"/>
<dbReference type="Proteomes" id="UP000002419">
    <property type="component" value="Chromosome"/>
</dbReference>
<dbReference type="GO" id="GO:0005737">
    <property type="term" value="C:cytoplasm"/>
    <property type="evidence" value="ECO:0007669"/>
    <property type="project" value="UniProtKB-SubCell"/>
</dbReference>
<dbReference type="GO" id="GO:0009379">
    <property type="term" value="C:Holliday junction helicase complex"/>
    <property type="evidence" value="ECO:0007669"/>
    <property type="project" value="InterPro"/>
</dbReference>
<dbReference type="GO" id="GO:0048476">
    <property type="term" value="C:Holliday junction resolvase complex"/>
    <property type="evidence" value="ECO:0007669"/>
    <property type="project" value="UniProtKB-UniRule"/>
</dbReference>
<dbReference type="GO" id="GO:0005524">
    <property type="term" value="F:ATP binding"/>
    <property type="evidence" value="ECO:0007669"/>
    <property type="project" value="InterPro"/>
</dbReference>
<dbReference type="GO" id="GO:0000400">
    <property type="term" value="F:four-way junction DNA binding"/>
    <property type="evidence" value="ECO:0007669"/>
    <property type="project" value="UniProtKB-UniRule"/>
</dbReference>
<dbReference type="GO" id="GO:0009378">
    <property type="term" value="F:four-way junction helicase activity"/>
    <property type="evidence" value="ECO:0007669"/>
    <property type="project" value="InterPro"/>
</dbReference>
<dbReference type="GO" id="GO:0006310">
    <property type="term" value="P:DNA recombination"/>
    <property type="evidence" value="ECO:0007669"/>
    <property type="project" value="UniProtKB-UniRule"/>
</dbReference>
<dbReference type="GO" id="GO:0006281">
    <property type="term" value="P:DNA repair"/>
    <property type="evidence" value="ECO:0007669"/>
    <property type="project" value="UniProtKB-UniRule"/>
</dbReference>
<dbReference type="CDD" id="cd14332">
    <property type="entry name" value="UBA_RuvA_C"/>
    <property type="match status" value="1"/>
</dbReference>
<dbReference type="Gene3D" id="1.10.150.20">
    <property type="entry name" value="5' to 3' exonuclease, C-terminal subdomain"/>
    <property type="match status" value="1"/>
</dbReference>
<dbReference type="Gene3D" id="1.10.8.10">
    <property type="entry name" value="DNA helicase RuvA subunit, C-terminal domain"/>
    <property type="match status" value="1"/>
</dbReference>
<dbReference type="Gene3D" id="2.40.50.140">
    <property type="entry name" value="Nucleic acid-binding proteins"/>
    <property type="match status" value="1"/>
</dbReference>
<dbReference type="HAMAP" id="MF_00031">
    <property type="entry name" value="DNA_HJ_migration_RuvA"/>
    <property type="match status" value="1"/>
</dbReference>
<dbReference type="InterPro" id="IPR013849">
    <property type="entry name" value="DNA_helicase_Holl-junc_RuvA_I"/>
</dbReference>
<dbReference type="InterPro" id="IPR003583">
    <property type="entry name" value="Hlx-hairpin-Hlx_DNA-bd_motif"/>
</dbReference>
<dbReference type="InterPro" id="IPR012340">
    <property type="entry name" value="NA-bd_OB-fold"/>
</dbReference>
<dbReference type="InterPro" id="IPR000085">
    <property type="entry name" value="RuvA"/>
</dbReference>
<dbReference type="InterPro" id="IPR010994">
    <property type="entry name" value="RuvA_2-like"/>
</dbReference>
<dbReference type="InterPro" id="IPR011114">
    <property type="entry name" value="RuvA_C"/>
</dbReference>
<dbReference type="InterPro" id="IPR036267">
    <property type="entry name" value="RuvA_C_sf"/>
</dbReference>
<dbReference type="NCBIfam" id="TIGR00084">
    <property type="entry name" value="ruvA"/>
    <property type="match status" value="1"/>
</dbReference>
<dbReference type="Pfam" id="PF14520">
    <property type="entry name" value="HHH_5"/>
    <property type="match status" value="1"/>
</dbReference>
<dbReference type="Pfam" id="PF07499">
    <property type="entry name" value="RuvA_C"/>
    <property type="match status" value="1"/>
</dbReference>
<dbReference type="Pfam" id="PF01330">
    <property type="entry name" value="RuvA_N"/>
    <property type="match status" value="1"/>
</dbReference>
<dbReference type="SMART" id="SM00278">
    <property type="entry name" value="HhH1"/>
    <property type="match status" value="2"/>
</dbReference>
<dbReference type="SUPFAM" id="SSF46929">
    <property type="entry name" value="DNA helicase RuvA subunit, C-terminal domain"/>
    <property type="match status" value="1"/>
</dbReference>
<dbReference type="SUPFAM" id="SSF50249">
    <property type="entry name" value="Nucleic acid-binding proteins"/>
    <property type="match status" value="1"/>
</dbReference>
<dbReference type="SUPFAM" id="SSF47781">
    <property type="entry name" value="RuvA domain 2-like"/>
    <property type="match status" value="1"/>
</dbReference>